<name>Y5486_ARATH</name>
<comment type="sequence caution" evidence="2">
    <conflict type="erroneous gene model prediction">
        <sequence resource="EMBL-CDS" id="BAA97293"/>
    </conflict>
    <text>The predicted gene At5g64810 has been split into 3 genes: At5g64810, At5g64813 and At5g64816.</text>
</comment>
<protein>
    <recommendedName>
        <fullName>Uncharacterized protein At5g64816</fullName>
    </recommendedName>
</protein>
<reference key="1">
    <citation type="journal article" date="2000" name="DNA Res.">
        <title>Structural analysis of Arabidopsis thaliana chromosome 5. X. Sequence features of the regions of 3,076,755 bp covered by sixty P1 and TAC clones.</title>
        <authorList>
            <person name="Sato S."/>
            <person name="Nakamura Y."/>
            <person name="Kaneko T."/>
            <person name="Katoh T."/>
            <person name="Asamizu E."/>
            <person name="Kotani H."/>
            <person name="Tabata S."/>
        </authorList>
    </citation>
    <scope>NUCLEOTIDE SEQUENCE [LARGE SCALE GENOMIC DNA]</scope>
    <source>
        <strain>cv. Columbia</strain>
    </source>
</reference>
<reference key="2">
    <citation type="journal article" date="2017" name="Plant J.">
        <title>Araport11: a complete reannotation of the Arabidopsis thaliana reference genome.</title>
        <authorList>
            <person name="Cheng C.Y."/>
            <person name="Krishnakumar V."/>
            <person name="Chan A.P."/>
            <person name="Thibaud-Nissen F."/>
            <person name="Schobel S."/>
            <person name="Town C.D."/>
        </authorList>
    </citation>
    <scope>GENOME REANNOTATION</scope>
    <source>
        <strain>cv. Columbia</strain>
    </source>
</reference>
<reference key="3">
    <citation type="submission" date="2002-03" db="EMBL/GenBank/DDBJ databases">
        <title>Full-length cDNA from Arabidopsis thaliana.</title>
        <authorList>
            <person name="Brover V.V."/>
            <person name="Troukhan M.E."/>
            <person name="Alexandrov N.A."/>
            <person name="Lu Y.-P."/>
            <person name="Flavell R.B."/>
            <person name="Feldmann K.A."/>
        </authorList>
    </citation>
    <scope>NUCLEOTIDE SEQUENCE [LARGE SCALE MRNA]</scope>
</reference>
<accession>Q8L8Q8</accession>
<accession>Q9LV96</accession>
<gene>
    <name type="ordered locus">At5g64816</name>
    <name type="ORF">MXK3.3</name>
</gene>
<evidence type="ECO:0000255" key="1"/>
<evidence type="ECO:0000305" key="2"/>
<feature type="signal peptide" evidence="1">
    <location>
        <begin position="1"/>
        <end position="18"/>
    </location>
</feature>
<feature type="chain" id="PRO_0000013634" description="Uncharacterized protein At5g64816">
    <location>
        <begin position="19"/>
        <end position="130"/>
    </location>
</feature>
<proteinExistence type="evidence at transcript level"/>
<keyword id="KW-1185">Reference proteome</keyword>
<keyword id="KW-0732">Signal</keyword>
<dbReference type="EMBL" id="AB019236">
    <property type="protein sequence ID" value="BAA97293.1"/>
    <property type="status" value="ALT_SEQ"/>
    <property type="molecule type" value="Genomic_DNA"/>
</dbReference>
<dbReference type="EMBL" id="CP002688">
    <property type="protein sequence ID" value="AED97955.1"/>
    <property type="molecule type" value="Genomic_DNA"/>
</dbReference>
<dbReference type="EMBL" id="CP002688">
    <property type="protein sequence ID" value="AED97956.1"/>
    <property type="molecule type" value="Genomic_DNA"/>
</dbReference>
<dbReference type="EMBL" id="CP002688">
    <property type="protein sequence ID" value="ANM70067.1"/>
    <property type="molecule type" value="Genomic_DNA"/>
</dbReference>
<dbReference type="EMBL" id="CP002688">
    <property type="protein sequence ID" value="ANM70068.1"/>
    <property type="molecule type" value="Genomic_DNA"/>
</dbReference>
<dbReference type="EMBL" id="AY088870">
    <property type="protein sequence ID" value="AAM67176.1"/>
    <property type="molecule type" value="mRNA"/>
</dbReference>
<dbReference type="RefSeq" id="NP_001331704.1">
    <property type="nucleotide sequence ID" value="NM_001345652.1"/>
</dbReference>
<dbReference type="RefSeq" id="NP_001331705.1">
    <property type="nucleotide sequence ID" value="NM_001345653.1"/>
</dbReference>
<dbReference type="RefSeq" id="NP_568997.1">
    <property type="nucleotide sequence ID" value="NM_125879.4"/>
</dbReference>
<dbReference type="RefSeq" id="NP_974994.1">
    <property type="nucleotide sequence ID" value="NM_203265.3"/>
</dbReference>
<dbReference type="FunCoup" id="Q8L8Q8">
    <property type="interactions" value="118"/>
</dbReference>
<dbReference type="STRING" id="3702.Q8L8Q8"/>
<dbReference type="iPTMnet" id="Q8L8Q8"/>
<dbReference type="PaxDb" id="3702-AT5G64816.2"/>
<dbReference type="ProteomicsDB" id="243137"/>
<dbReference type="EnsemblPlants" id="AT5G64816.1">
    <property type="protein sequence ID" value="AT5G64816.1"/>
    <property type="gene ID" value="AT5G64816"/>
</dbReference>
<dbReference type="EnsemblPlants" id="AT5G64816.2">
    <property type="protein sequence ID" value="AT5G64816.2"/>
    <property type="gene ID" value="AT5G64816"/>
</dbReference>
<dbReference type="EnsemblPlants" id="AT5G64816.3">
    <property type="protein sequence ID" value="AT5G64816.3"/>
    <property type="gene ID" value="AT5G64816"/>
</dbReference>
<dbReference type="EnsemblPlants" id="AT5G64816.4">
    <property type="protein sequence ID" value="AT5G64816.4"/>
    <property type="gene ID" value="AT5G64816"/>
</dbReference>
<dbReference type="GeneID" id="836604"/>
<dbReference type="Gramene" id="AT5G64816.1">
    <property type="protein sequence ID" value="AT5G64816.1"/>
    <property type="gene ID" value="AT5G64816"/>
</dbReference>
<dbReference type="Gramene" id="AT5G64816.2">
    <property type="protein sequence ID" value="AT5G64816.2"/>
    <property type="gene ID" value="AT5G64816"/>
</dbReference>
<dbReference type="Gramene" id="AT5G64816.3">
    <property type="protein sequence ID" value="AT5G64816.3"/>
    <property type="gene ID" value="AT5G64816"/>
</dbReference>
<dbReference type="Gramene" id="AT5G64816.4">
    <property type="protein sequence ID" value="AT5G64816.4"/>
    <property type="gene ID" value="AT5G64816"/>
</dbReference>
<dbReference type="KEGG" id="ath:AT5G64816"/>
<dbReference type="Araport" id="AT5G64816"/>
<dbReference type="TAIR" id="AT5G64816"/>
<dbReference type="eggNOG" id="ENOG502S01Q">
    <property type="taxonomic scope" value="Eukaryota"/>
</dbReference>
<dbReference type="HOGENOM" id="CLU_131757_0_0_1"/>
<dbReference type="InParanoid" id="Q8L8Q8"/>
<dbReference type="OMA" id="RIRRNHA"/>
<dbReference type="OrthoDB" id="1875050at2759"/>
<dbReference type="PhylomeDB" id="Q8L8Q8"/>
<dbReference type="PRO" id="PR:Q8L8Q8"/>
<dbReference type="Proteomes" id="UP000006548">
    <property type="component" value="Chromosome 5"/>
</dbReference>
<dbReference type="ExpressionAtlas" id="Q8L8Q8">
    <property type="expression patterns" value="baseline and differential"/>
</dbReference>
<dbReference type="GO" id="GO:0009536">
    <property type="term" value="C:plastid"/>
    <property type="evidence" value="ECO:0007005"/>
    <property type="project" value="TAIR"/>
</dbReference>
<dbReference type="InterPro" id="IPR038934">
    <property type="entry name" value="At5g64816-like"/>
</dbReference>
<dbReference type="PANTHER" id="PTHR35548">
    <property type="entry name" value="EXPRESSED PROTEIN"/>
    <property type="match status" value="1"/>
</dbReference>
<dbReference type="PANTHER" id="PTHR35548:SF1">
    <property type="entry name" value="EXPRESSED PROTEIN"/>
    <property type="match status" value="1"/>
</dbReference>
<sequence>MVEVWWSLIGAAVPALIAGQAWRIKKRHGEEERIKSARGREKSSDEIFVCERVCTSKRMLKKVGAFSKDPIPDTCVTVCGVSELDACSDACARTVCVNQHQVANWNDICLRRCQSECLKLSSSSSSSRYS</sequence>
<organism>
    <name type="scientific">Arabidopsis thaliana</name>
    <name type="common">Mouse-ear cress</name>
    <dbReference type="NCBI Taxonomy" id="3702"/>
    <lineage>
        <taxon>Eukaryota</taxon>
        <taxon>Viridiplantae</taxon>
        <taxon>Streptophyta</taxon>
        <taxon>Embryophyta</taxon>
        <taxon>Tracheophyta</taxon>
        <taxon>Spermatophyta</taxon>
        <taxon>Magnoliopsida</taxon>
        <taxon>eudicotyledons</taxon>
        <taxon>Gunneridae</taxon>
        <taxon>Pentapetalae</taxon>
        <taxon>rosids</taxon>
        <taxon>malvids</taxon>
        <taxon>Brassicales</taxon>
        <taxon>Brassicaceae</taxon>
        <taxon>Camelineae</taxon>
        <taxon>Arabidopsis</taxon>
    </lineage>
</organism>